<comment type="function">
    <text evidence="1">One of the primary rRNA binding proteins, it binds directly to 16S rRNA central domain where it helps coordinate assembly of the platform of the 30S subunit.</text>
</comment>
<comment type="subunit">
    <text evidence="1">Part of the 30S ribosomal subunit.</text>
</comment>
<comment type="subcellular location">
    <subcellularLocation>
        <location>Plastid</location>
        <location>Chloroplast</location>
    </subcellularLocation>
</comment>
<comment type="similarity">
    <text evidence="2">Belongs to the universal ribosomal protein uS8 family.</text>
</comment>
<gene>
    <name type="primary">rps8</name>
</gene>
<organism>
    <name type="scientific">Tetradesmus obliquus</name>
    <name type="common">Green alga</name>
    <name type="synonym">Acutodesmus obliquus</name>
    <dbReference type="NCBI Taxonomy" id="3088"/>
    <lineage>
        <taxon>Eukaryota</taxon>
        <taxon>Viridiplantae</taxon>
        <taxon>Chlorophyta</taxon>
        <taxon>core chlorophytes</taxon>
        <taxon>Chlorophyceae</taxon>
        <taxon>CS clade</taxon>
        <taxon>Sphaeropleales</taxon>
        <taxon>Scenedesmaceae</taxon>
        <taxon>Tetradesmus</taxon>
    </lineage>
</organism>
<keyword id="KW-0150">Chloroplast</keyword>
<keyword id="KW-0934">Plastid</keyword>
<keyword id="KW-0687">Ribonucleoprotein</keyword>
<keyword id="KW-0689">Ribosomal protein</keyword>
<keyword id="KW-0694">RNA-binding</keyword>
<keyword id="KW-0699">rRNA-binding</keyword>
<feature type="chain" id="PRO_0000276731" description="Small ribosomal subunit protein uS8c">
    <location>
        <begin position="1"/>
        <end position="136"/>
    </location>
</feature>
<accession>Q1KVR3</accession>
<protein>
    <recommendedName>
        <fullName evidence="2">Small ribosomal subunit protein uS8c</fullName>
    </recommendedName>
    <alternativeName>
        <fullName>30S ribosomal protein S8, chloroplastic</fullName>
    </alternativeName>
</protein>
<geneLocation type="chloroplast"/>
<sequence length="136" mass="15199">MVNDTISDMLTRIRNASMVKKSTVLIPFTKMNQKIAQILEKEGFIQSFFLEEDSKMLVLKFKYRSKKTSNAKTKESCITNLKRISKPGLRIYTNSQDIPRVLGGAGILILSTSVGILTDREARALGVGGEILCSIW</sequence>
<name>RR8_TETOB</name>
<evidence type="ECO:0000250" key="1"/>
<evidence type="ECO:0000305" key="2"/>
<proteinExistence type="inferred from homology"/>
<dbReference type="EMBL" id="DQ396875">
    <property type="protein sequence ID" value="ABD48294.1"/>
    <property type="molecule type" value="Genomic_DNA"/>
</dbReference>
<dbReference type="RefSeq" id="YP_636011.1">
    <property type="nucleotide sequence ID" value="NC_008101.1"/>
</dbReference>
<dbReference type="SMR" id="Q1KVR3"/>
<dbReference type="GeneID" id="4099844"/>
<dbReference type="GO" id="GO:0009507">
    <property type="term" value="C:chloroplast"/>
    <property type="evidence" value="ECO:0007669"/>
    <property type="project" value="UniProtKB-SubCell"/>
</dbReference>
<dbReference type="GO" id="GO:1990904">
    <property type="term" value="C:ribonucleoprotein complex"/>
    <property type="evidence" value="ECO:0007669"/>
    <property type="project" value="UniProtKB-KW"/>
</dbReference>
<dbReference type="GO" id="GO:0005840">
    <property type="term" value="C:ribosome"/>
    <property type="evidence" value="ECO:0007669"/>
    <property type="project" value="UniProtKB-KW"/>
</dbReference>
<dbReference type="GO" id="GO:0019843">
    <property type="term" value="F:rRNA binding"/>
    <property type="evidence" value="ECO:0007669"/>
    <property type="project" value="UniProtKB-UniRule"/>
</dbReference>
<dbReference type="GO" id="GO:0003735">
    <property type="term" value="F:structural constituent of ribosome"/>
    <property type="evidence" value="ECO:0007669"/>
    <property type="project" value="InterPro"/>
</dbReference>
<dbReference type="GO" id="GO:0006412">
    <property type="term" value="P:translation"/>
    <property type="evidence" value="ECO:0007669"/>
    <property type="project" value="UniProtKB-UniRule"/>
</dbReference>
<dbReference type="FunFam" id="3.30.1370.30:FF:000002">
    <property type="entry name" value="30S ribosomal protein S8"/>
    <property type="match status" value="1"/>
</dbReference>
<dbReference type="FunFam" id="3.30.1490.10:FF:000001">
    <property type="entry name" value="30S ribosomal protein S8"/>
    <property type="match status" value="1"/>
</dbReference>
<dbReference type="Gene3D" id="3.30.1370.30">
    <property type="match status" value="1"/>
</dbReference>
<dbReference type="Gene3D" id="3.30.1490.10">
    <property type="match status" value="1"/>
</dbReference>
<dbReference type="HAMAP" id="MF_01302_B">
    <property type="entry name" value="Ribosomal_uS8_B"/>
    <property type="match status" value="1"/>
</dbReference>
<dbReference type="InterPro" id="IPR000630">
    <property type="entry name" value="Ribosomal_uS8"/>
</dbReference>
<dbReference type="InterPro" id="IPR047863">
    <property type="entry name" value="Ribosomal_uS8_CS"/>
</dbReference>
<dbReference type="InterPro" id="IPR035987">
    <property type="entry name" value="Ribosomal_uS8_sf"/>
</dbReference>
<dbReference type="NCBIfam" id="NF001109">
    <property type="entry name" value="PRK00136.1"/>
    <property type="match status" value="1"/>
</dbReference>
<dbReference type="PANTHER" id="PTHR11758">
    <property type="entry name" value="40S RIBOSOMAL PROTEIN S15A"/>
    <property type="match status" value="1"/>
</dbReference>
<dbReference type="Pfam" id="PF00410">
    <property type="entry name" value="Ribosomal_S8"/>
    <property type="match status" value="1"/>
</dbReference>
<dbReference type="SUPFAM" id="SSF56047">
    <property type="entry name" value="Ribosomal protein S8"/>
    <property type="match status" value="1"/>
</dbReference>
<dbReference type="PROSITE" id="PS00053">
    <property type="entry name" value="RIBOSOMAL_S8"/>
    <property type="match status" value="1"/>
</dbReference>
<reference key="1">
    <citation type="journal article" date="2006" name="BMC Evol. Biol.">
        <title>The complete chloroplast genome sequence of the chlorophycean green alga Scenedesmus obliquus reveals a compact gene organization and a biased distribution of genes on the two DNA strands.</title>
        <authorList>
            <person name="de Cambiaire J.-C."/>
            <person name="Otis C."/>
            <person name="Lemieux C."/>
            <person name="Turmel M."/>
        </authorList>
    </citation>
    <scope>NUCLEOTIDE SEQUENCE [LARGE SCALE GENOMIC DNA]</scope>
    <source>
        <strain>UTEX 393</strain>
    </source>
</reference>